<reference key="1">
    <citation type="journal article" date="2008" name="J. Bacteriol.">
        <title>Insights into the environmental resistance gene pool from the genome sequence of the multidrug-resistant environmental isolate Escherichia coli SMS-3-5.</title>
        <authorList>
            <person name="Fricke W.F."/>
            <person name="Wright M.S."/>
            <person name="Lindell A.H."/>
            <person name="Harkins D.M."/>
            <person name="Baker-Austin C."/>
            <person name="Ravel J."/>
            <person name="Stepanauskas R."/>
        </authorList>
    </citation>
    <scope>NUCLEOTIDE SEQUENCE [LARGE SCALE GENOMIC DNA]</scope>
    <source>
        <strain>SMS-3-5 / SECEC</strain>
    </source>
</reference>
<feature type="chain" id="PRO_1000143988" description="Large ribosomal subunit protein uL6">
    <location>
        <begin position="1"/>
        <end position="177"/>
    </location>
</feature>
<feature type="modified residue" description="N6-acetyllysine" evidence="1">
    <location>
        <position position="44"/>
    </location>
</feature>
<organism>
    <name type="scientific">Escherichia coli (strain SMS-3-5 / SECEC)</name>
    <dbReference type="NCBI Taxonomy" id="439855"/>
    <lineage>
        <taxon>Bacteria</taxon>
        <taxon>Pseudomonadati</taxon>
        <taxon>Pseudomonadota</taxon>
        <taxon>Gammaproteobacteria</taxon>
        <taxon>Enterobacterales</taxon>
        <taxon>Enterobacteriaceae</taxon>
        <taxon>Escherichia</taxon>
    </lineage>
</organism>
<evidence type="ECO:0000255" key="1">
    <source>
        <dbReference type="HAMAP-Rule" id="MF_01365"/>
    </source>
</evidence>
<evidence type="ECO:0000305" key="2"/>
<keyword id="KW-0007">Acetylation</keyword>
<keyword id="KW-0687">Ribonucleoprotein</keyword>
<keyword id="KW-0689">Ribosomal protein</keyword>
<keyword id="KW-0694">RNA-binding</keyword>
<keyword id="KW-0699">rRNA-binding</keyword>
<accession>B1LHB9</accession>
<name>RL6_ECOSM</name>
<comment type="function">
    <text evidence="1">This protein binds to the 23S rRNA, and is important in its secondary structure. It is located near the subunit interface in the base of the L7/L12 stalk, and near the tRNA binding site of the peptidyltransferase center.</text>
</comment>
<comment type="subunit">
    <text evidence="1">Part of the 50S ribosomal subunit.</text>
</comment>
<comment type="similarity">
    <text evidence="1">Belongs to the universal ribosomal protein uL6 family.</text>
</comment>
<sequence length="177" mass="18904">MSRVAKAPVVVPAGVDVKINGQVITIKGKNGELTRTLNDAVEVKHADNTLTFGPRDGYADGWAQAGTARALLNSMVIGVTEGFTKKLQLVGVGYRAAVKGNVINLSLGFSHPVDHQLPAGITAECPTQTEIVLKGADKQVIGQVAADLRAYRRPEPYKGKGVRYADEVVRTKEAKKK</sequence>
<proteinExistence type="inferred from homology"/>
<gene>
    <name evidence="1" type="primary">rplF</name>
    <name type="ordered locus">EcSMS35_3600</name>
</gene>
<protein>
    <recommendedName>
        <fullName evidence="1">Large ribosomal subunit protein uL6</fullName>
    </recommendedName>
    <alternativeName>
        <fullName evidence="2">50S ribosomal protein L6</fullName>
    </alternativeName>
</protein>
<dbReference type="EMBL" id="CP000970">
    <property type="protein sequence ID" value="ACB16428.1"/>
    <property type="molecule type" value="Genomic_DNA"/>
</dbReference>
<dbReference type="RefSeq" id="WP_000091945.1">
    <property type="nucleotide sequence ID" value="NC_010498.1"/>
</dbReference>
<dbReference type="SMR" id="B1LHB9"/>
<dbReference type="GeneID" id="86948169"/>
<dbReference type="KEGG" id="ecm:EcSMS35_3600"/>
<dbReference type="HOGENOM" id="CLU_065464_1_2_6"/>
<dbReference type="Proteomes" id="UP000007011">
    <property type="component" value="Chromosome"/>
</dbReference>
<dbReference type="GO" id="GO:0022625">
    <property type="term" value="C:cytosolic large ribosomal subunit"/>
    <property type="evidence" value="ECO:0007669"/>
    <property type="project" value="TreeGrafter"/>
</dbReference>
<dbReference type="GO" id="GO:0019843">
    <property type="term" value="F:rRNA binding"/>
    <property type="evidence" value="ECO:0007669"/>
    <property type="project" value="UniProtKB-UniRule"/>
</dbReference>
<dbReference type="GO" id="GO:0003735">
    <property type="term" value="F:structural constituent of ribosome"/>
    <property type="evidence" value="ECO:0007669"/>
    <property type="project" value="InterPro"/>
</dbReference>
<dbReference type="GO" id="GO:0002181">
    <property type="term" value="P:cytoplasmic translation"/>
    <property type="evidence" value="ECO:0007669"/>
    <property type="project" value="TreeGrafter"/>
</dbReference>
<dbReference type="FunFam" id="3.90.930.12:FF:000001">
    <property type="entry name" value="50S ribosomal protein L6"/>
    <property type="match status" value="1"/>
</dbReference>
<dbReference type="FunFam" id="3.90.930.12:FF:000002">
    <property type="entry name" value="50S ribosomal protein L6"/>
    <property type="match status" value="1"/>
</dbReference>
<dbReference type="Gene3D" id="3.90.930.12">
    <property type="entry name" value="Ribosomal protein L6, alpha-beta domain"/>
    <property type="match status" value="2"/>
</dbReference>
<dbReference type="HAMAP" id="MF_01365_B">
    <property type="entry name" value="Ribosomal_uL6_B"/>
    <property type="match status" value="1"/>
</dbReference>
<dbReference type="InterPro" id="IPR000702">
    <property type="entry name" value="Ribosomal_uL6-like"/>
</dbReference>
<dbReference type="InterPro" id="IPR036789">
    <property type="entry name" value="Ribosomal_uL6-like_a/b-dom_sf"/>
</dbReference>
<dbReference type="InterPro" id="IPR020040">
    <property type="entry name" value="Ribosomal_uL6_a/b-dom"/>
</dbReference>
<dbReference type="InterPro" id="IPR019906">
    <property type="entry name" value="Ribosomal_uL6_bac-type"/>
</dbReference>
<dbReference type="InterPro" id="IPR002358">
    <property type="entry name" value="Ribosomal_uL6_CS"/>
</dbReference>
<dbReference type="NCBIfam" id="TIGR03654">
    <property type="entry name" value="L6_bact"/>
    <property type="match status" value="1"/>
</dbReference>
<dbReference type="PANTHER" id="PTHR11655">
    <property type="entry name" value="60S/50S RIBOSOMAL PROTEIN L6/L9"/>
    <property type="match status" value="1"/>
</dbReference>
<dbReference type="PANTHER" id="PTHR11655:SF14">
    <property type="entry name" value="LARGE RIBOSOMAL SUBUNIT PROTEIN UL6M"/>
    <property type="match status" value="1"/>
</dbReference>
<dbReference type="Pfam" id="PF00347">
    <property type="entry name" value="Ribosomal_L6"/>
    <property type="match status" value="2"/>
</dbReference>
<dbReference type="PIRSF" id="PIRSF002162">
    <property type="entry name" value="Ribosomal_L6"/>
    <property type="match status" value="1"/>
</dbReference>
<dbReference type="PRINTS" id="PR00059">
    <property type="entry name" value="RIBOSOMALL6"/>
</dbReference>
<dbReference type="SUPFAM" id="SSF56053">
    <property type="entry name" value="Ribosomal protein L6"/>
    <property type="match status" value="2"/>
</dbReference>
<dbReference type="PROSITE" id="PS00525">
    <property type="entry name" value="RIBOSOMAL_L6_1"/>
    <property type="match status" value="1"/>
</dbReference>